<feature type="chain" id="PRO_0000374770" description="Ribosomal protein uS12 methylthiotransferase RimO">
    <location>
        <begin position="1"/>
        <end position="455"/>
    </location>
</feature>
<feature type="domain" description="MTTase N-terminal" evidence="1">
    <location>
        <begin position="1"/>
        <end position="114"/>
    </location>
</feature>
<feature type="domain" description="Radical SAM core" evidence="2">
    <location>
        <begin position="152"/>
        <end position="383"/>
    </location>
</feature>
<feature type="domain" description="TRAM" evidence="1">
    <location>
        <begin position="386"/>
        <end position="455"/>
    </location>
</feature>
<feature type="binding site" evidence="1">
    <location>
        <position position="10"/>
    </location>
    <ligand>
        <name>[4Fe-4S] cluster</name>
        <dbReference type="ChEBI" id="CHEBI:49883"/>
        <label>1</label>
    </ligand>
</feature>
<feature type="binding site" evidence="1">
    <location>
        <position position="46"/>
    </location>
    <ligand>
        <name>[4Fe-4S] cluster</name>
        <dbReference type="ChEBI" id="CHEBI:49883"/>
        <label>1</label>
    </ligand>
</feature>
<feature type="binding site" evidence="1">
    <location>
        <position position="78"/>
    </location>
    <ligand>
        <name>[4Fe-4S] cluster</name>
        <dbReference type="ChEBI" id="CHEBI:49883"/>
        <label>1</label>
    </ligand>
</feature>
<feature type="binding site" evidence="1">
    <location>
        <position position="166"/>
    </location>
    <ligand>
        <name>[4Fe-4S] cluster</name>
        <dbReference type="ChEBI" id="CHEBI:49883"/>
        <label>2</label>
        <note>4Fe-4S-S-AdoMet</note>
    </ligand>
</feature>
<feature type="binding site" evidence="1">
    <location>
        <position position="170"/>
    </location>
    <ligand>
        <name>[4Fe-4S] cluster</name>
        <dbReference type="ChEBI" id="CHEBI:49883"/>
        <label>2</label>
        <note>4Fe-4S-S-AdoMet</note>
    </ligand>
</feature>
<feature type="binding site" evidence="1">
    <location>
        <position position="173"/>
    </location>
    <ligand>
        <name>[4Fe-4S] cluster</name>
        <dbReference type="ChEBI" id="CHEBI:49883"/>
        <label>2</label>
        <note>4Fe-4S-S-AdoMet</note>
    </ligand>
</feature>
<gene>
    <name evidence="1" type="primary">rimO</name>
    <name type="ordered locus">Caur_1853</name>
</gene>
<accession>A9WDA3</accession>
<name>RIMO_CHLAA</name>
<proteinExistence type="inferred from homology"/>
<keyword id="KW-0004">4Fe-4S</keyword>
<keyword id="KW-0963">Cytoplasm</keyword>
<keyword id="KW-0408">Iron</keyword>
<keyword id="KW-0411">Iron-sulfur</keyword>
<keyword id="KW-0479">Metal-binding</keyword>
<keyword id="KW-1185">Reference proteome</keyword>
<keyword id="KW-0949">S-adenosyl-L-methionine</keyword>
<keyword id="KW-0808">Transferase</keyword>
<organism>
    <name type="scientific">Chloroflexus aurantiacus (strain ATCC 29366 / DSM 635 / J-10-fl)</name>
    <dbReference type="NCBI Taxonomy" id="324602"/>
    <lineage>
        <taxon>Bacteria</taxon>
        <taxon>Bacillati</taxon>
        <taxon>Chloroflexota</taxon>
        <taxon>Chloroflexia</taxon>
        <taxon>Chloroflexales</taxon>
        <taxon>Chloroflexineae</taxon>
        <taxon>Chloroflexaceae</taxon>
        <taxon>Chloroflexus</taxon>
    </lineage>
</organism>
<dbReference type="EC" id="2.8.4.4" evidence="1"/>
<dbReference type="EMBL" id="CP000909">
    <property type="protein sequence ID" value="ABY35070.1"/>
    <property type="molecule type" value="Genomic_DNA"/>
</dbReference>
<dbReference type="RefSeq" id="WP_012257724.1">
    <property type="nucleotide sequence ID" value="NC_010175.1"/>
</dbReference>
<dbReference type="RefSeq" id="YP_001635459.1">
    <property type="nucleotide sequence ID" value="NC_010175.1"/>
</dbReference>
<dbReference type="SMR" id="A9WDA3"/>
<dbReference type="STRING" id="324602.Caur_1853"/>
<dbReference type="EnsemblBacteria" id="ABY35070">
    <property type="protein sequence ID" value="ABY35070"/>
    <property type="gene ID" value="Caur_1853"/>
</dbReference>
<dbReference type="KEGG" id="cau:Caur_1853"/>
<dbReference type="PATRIC" id="fig|324602.8.peg.2116"/>
<dbReference type="eggNOG" id="COG0621">
    <property type="taxonomic scope" value="Bacteria"/>
</dbReference>
<dbReference type="HOGENOM" id="CLU_018697_0_0_0"/>
<dbReference type="InParanoid" id="A9WDA3"/>
<dbReference type="Proteomes" id="UP000002008">
    <property type="component" value="Chromosome"/>
</dbReference>
<dbReference type="GO" id="GO:0005829">
    <property type="term" value="C:cytosol"/>
    <property type="evidence" value="ECO:0000318"/>
    <property type="project" value="GO_Central"/>
</dbReference>
<dbReference type="GO" id="GO:0051539">
    <property type="term" value="F:4 iron, 4 sulfur cluster binding"/>
    <property type="evidence" value="ECO:0000318"/>
    <property type="project" value="GO_Central"/>
</dbReference>
<dbReference type="GO" id="GO:0035599">
    <property type="term" value="F:aspartic acid methylthiotransferase activity"/>
    <property type="evidence" value="ECO:0000318"/>
    <property type="project" value="GO_Central"/>
</dbReference>
<dbReference type="GO" id="GO:0046872">
    <property type="term" value="F:metal ion binding"/>
    <property type="evidence" value="ECO:0007669"/>
    <property type="project" value="UniProtKB-KW"/>
</dbReference>
<dbReference type="GO" id="GO:0103039">
    <property type="term" value="F:protein methylthiotransferase activity"/>
    <property type="evidence" value="ECO:0007669"/>
    <property type="project" value="UniProtKB-EC"/>
</dbReference>
<dbReference type="GO" id="GO:0006400">
    <property type="term" value="P:tRNA modification"/>
    <property type="evidence" value="ECO:0007669"/>
    <property type="project" value="InterPro"/>
</dbReference>
<dbReference type="CDD" id="cd01335">
    <property type="entry name" value="Radical_SAM"/>
    <property type="match status" value="1"/>
</dbReference>
<dbReference type="FunFam" id="2.40.50.140:FF:000210">
    <property type="entry name" value="Ribosomal protein S12 methylthiotransferase RimO"/>
    <property type="match status" value="1"/>
</dbReference>
<dbReference type="FunFam" id="3.80.30.20:FF:000001">
    <property type="entry name" value="tRNA-2-methylthio-N(6)-dimethylallyladenosine synthase 2"/>
    <property type="match status" value="1"/>
</dbReference>
<dbReference type="Gene3D" id="3.40.50.12160">
    <property type="entry name" value="Methylthiotransferase, N-terminal domain"/>
    <property type="match status" value="1"/>
</dbReference>
<dbReference type="Gene3D" id="2.40.50.140">
    <property type="entry name" value="Nucleic acid-binding proteins"/>
    <property type="match status" value="1"/>
</dbReference>
<dbReference type="Gene3D" id="3.80.30.20">
    <property type="entry name" value="tm_1862 like domain"/>
    <property type="match status" value="1"/>
</dbReference>
<dbReference type="HAMAP" id="MF_01865">
    <property type="entry name" value="MTTase_RimO"/>
    <property type="match status" value="1"/>
</dbReference>
<dbReference type="InterPro" id="IPR006638">
    <property type="entry name" value="Elp3/MiaA/NifB-like_rSAM"/>
</dbReference>
<dbReference type="InterPro" id="IPR005839">
    <property type="entry name" value="Methylthiotransferase"/>
</dbReference>
<dbReference type="InterPro" id="IPR020612">
    <property type="entry name" value="Methylthiotransferase_CS"/>
</dbReference>
<dbReference type="InterPro" id="IPR013848">
    <property type="entry name" value="Methylthiotransferase_N"/>
</dbReference>
<dbReference type="InterPro" id="IPR038135">
    <property type="entry name" value="Methylthiotransferase_N_sf"/>
</dbReference>
<dbReference type="InterPro" id="IPR000385">
    <property type="entry name" value="MoaA_NifB_PqqE_Fe-S-bd_CS"/>
</dbReference>
<dbReference type="InterPro" id="IPR012340">
    <property type="entry name" value="NA-bd_OB-fold"/>
</dbReference>
<dbReference type="InterPro" id="IPR005840">
    <property type="entry name" value="Ribosomal_uS12_MeSTrfase_RimO"/>
</dbReference>
<dbReference type="InterPro" id="IPR007197">
    <property type="entry name" value="rSAM"/>
</dbReference>
<dbReference type="InterPro" id="IPR023404">
    <property type="entry name" value="rSAM_horseshoe"/>
</dbReference>
<dbReference type="InterPro" id="IPR002792">
    <property type="entry name" value="TRAM_dom"/>
</dbReference>
<dbReference type="NCBIfam" id="TIGR01125">
    <property type="entry name" value="30S ribosomal protein S12 methylthiotransferase RimO"/>
    <property type="match status" value="1"/>
</dbReference>
<dbReference type="NCBIfam" id="TIGR00089">
    <property type="entry name" value="MiaB/RimO family radical SAM methylthiotransferase"/>
    <property type="match status" value="1"/>
</dbReference>
<dbReference type="PANTHER" id="PTHR43837">
    <property type="entry name" value="RIBOSOMAL PROTEIN S12 METHYLTHIOTRANSFERASE RIMO"/>
    <property type="match status" value="1"/>
</dbReference>
<dbReference type="PANTHER" id="PTHR43837:SF1">
    <property type="entry name" value="RIBOSOMAL PROTEIN US12 METHYLTHIOTRANSFERASE RIMO"/>
    <property type="match status" value="1"/>
</dbReference>
<dbReference type="Pfam" id="PF04055">
    <property type="entry name" value="Radical_SAM"/>
    <property type="match status" value="1"/>
</dbReference>
<dbReference type="Pfam" id="PF18693">
    <property type="entry name" value="TRAM_2"/>
    <property type="match status" value="1"/>
</dbReference>
<dbReference type="Pfam" id="PF00919">
    <property type="entry name" value="UPF0004"/>
    <property type="match status" value="1"/>
</dbReference>
<dbReference type="SFLD" id="SFLDG01082">
    <property type="entry name" value="B12-binding_domain_containing"/>
    <property type="match status" value="1"/>
</dbReference>
<dbReference type="SFLD" id="SFLDG01061">
    <property type="entry name" value="methylthiotransferase"/>
    <property type="match status" value="1"/>
</dbReference>
<dbReference type="SFLD" id="SFLDF00274">
    <property type="entry name" value="ribosomal_protein_S12_methylth"/>
    <property type="match status" value="1"/>
</dbReference>
<dbReference type="SMART" id="SM00729">
    <property type="entry name" value="Elp3"/>
    <property type="match status" value="1"/>
</dbReference>
<dbReference type="SUPFAM" id="SSF102114">
    <property type="entry name" value="Radical SAM enzymes"/>
    <property type="match status" value="1"/>
</dbReference>
<dbReference type="PROSITE" id="PS51449">
    <property type="entry name" value="MTTASE_N"/>
    <property type="match status" value="1"/>
</dbReference>
<dbReference type="PROSITE" id="PS01278">
    <property type="entry name" value="MTTASE_RADICAL"/>
    <property type="match status" value="1"/>
</dbReference>
<dbReference type="PROSITE" id="PS51918">
    <property type="entry name" value="RADICAL_SAM"/>
    <property type="match status" value="1"/>
</dbReference>
<dbReference type="PROSITE" id="PS50926">
    <property type="entry name" value="TRAM"/>
    <property type="match status" value="1"/>
</dbReference>
<evidence type="ECO:0000255" key="1">
    <source>
        <dbReference type="HAMAP-Rule" id="MF_01865"/>
    </source>
</evidence>
<evidence type="ECO:0000255" key="2">
    <source>
        <dbReference type="PROSITE-ProRule" id="PRU01266"/>
    </source>
</evidence>
<comment type="function">
    <text evidence="1">Catalyzes the methylthiolation of an aspartic acid residue of ribosomal protein uS12.</text>
</comment>
<comment type="catalytic activity">
    <reaction evidence="1">
        <text>L-aspartate(89)-[ribosomal protein uS12]-hydrogen + (sulfur carrier)-SH + AH2 + 2 S-adenosyl-L-methionine = 3-methylsulfanyl-L-aspartate(89)-[ribosomal protein uS12]-hydrogen + (sulfur carrier)-H + 5'-deoxyadenosine + L-methionine + A + S-adenosyl-L-homocysteine + 2 H(+)</text>
        <dbReference type="Rhea" id="RHEA:37087"/>
        <dbReference type="Rhea" id="RHEA-COMP:10460"/>
        <dbReference type="Rhea" id="RHEA-COMP:10461"/>
        <dbReference type="Rhea" id="RHEA-COMP:14737"/>
        <dbReference type="Rhea" id="RHEA-COMP:14739"/>
        <dbReference type="ChEBI" id="CHEBI:13193"/>
        <dbReference type="ChEBI" id="CHEBI:15378"/>
        <dbReference type="ChEBI" id="CHEBI:17319"/>
        <dbReference type="ChEBI" id="CHEBI:17499"/>
        <dbReference type="ChEBI" id="CHEBI:29917"/>
        <dbReference type="ChEBI" id="CHEBI:29961"/>
        <dbReference type="ChEBI" id="CHEBI:57844"/>
        <dbReference type="ChEBI" id="CHEBI:57856"/>
        <dbReference type="ChEBI" id="CHEBI:59789"/>
        <dbReference type="ChEBI" id="CHEBI:64428"/>
        <dbReference type="ChEBI" id="CHEBI:73599"/>
        <dbReference type="EC" id="2.8.4.4"/>
    </reaction>
</comment>
<comment type="cofactor">
    <cofactor evidence="1">
        <name>[4Fe-4S] cluster</name>
        <dbReference type="ChEBI" id="CHEBI:49883"/>
    </cofactor>
    <text evidence="1">Binds 2 [4Fe-4S] clusters. One cluster is coordinated with 3 cysteines and an exchangeable S-adenosyl-L-methionine.</text>
</comment>
<comment type="subcellular location">
    <subcellularLocation>
        <location evidence="1">Cytoplasm</location>
    </subcellularLocation>
</comment>
<comment type="similarity">
    <text evidence="1">Belongs to the methylthiotransferase family. RimO subfamily.</text>
</comment>
<sequence length="455" mass="49938">MKYHIVTLGCPKNAVDSEGMDGLLSTQGHQAVASAEEADVIIVNTCSFIAAARAETLGVLKELAGRKRPGQRLIAAGCMAQSHPHEVAGVQGVDATLGTQQWTQINALVGQLERPVIPLTPGQPVATIPLTTTTNGQPTSYADWRTTQIRRTHQTPSAYLKISDGCNLRCAFCTIPSFKGDMRSKPVGAVLAEAQELVAGGVREIVLVAQHLTDYGRDLGLKDGLATLLAELCQVTPPETWIRLMYAYPHGISERLITTMASYPQICHYLDMPLQHAHPATLRRMRRPPDTDRTLRIIAELRAAMPDIAIRSTFIVGYPGETTAEFHALLEFLQTAQLDRVGAFRYSREPGTPAAELPDQVRPQVIERRWHELMRLQQTISYTRNQRWVGRTIKVLIEGNGTADDGSALSIGRSFRDAPEIDGQVFVWGNYPAGTMIPVQVTQATAYDLWGEALS</sequence>
<reference key="1">
    <citation type="journal article" date="2011" name="BMC Genomics">
        <title>Complete genome sequence of the filamentous anoxygenic phototrophic bacterium Chloroflexus aurantiacus.</title>
        <authorList>
            <person name="Tang K.H."/>
            <person name="Barry K."/>
            <person name="Chertkov O."/>
            <person name="Dalin E."/>
            <person name="Han C.S."/>
            <person name="Hauser L.J."/>
            <person name="Honchak B.M."/>
            <person name="Karbach L.E."/>
            <person name="Land M.L."/>
            <person name="Lapidus A."/>
            <person name="Larimer F.W."/>
            <person name="Mikhailova N."/>
            <person name="Pitluck S."/>
            <person name="Pierson B.K."/>
            <person name="Blankenship R.E."/>
        </authorList>
    </citation>
    <scope>NUCLEOTIDE SEQUENCE [LARGE SCALE GENOMIC DNA]</scope>
    <source>
        <strain>ATCC 29366 / DSM 635 / J-10-fl</strain>
    </source>
</reference>
<protein>
    <recommendedName>
        <fullName evidence="1">Ribosomal protein uS12 methylthiotransferase RimO</fullName>
        <shortName evidence="1">uS12 MTTase</shortName>
        <shortName evidence="1">uS12 methylthiotransferase</shortName>
        <ecNumber evidence="1">2.8.4.4</ecNumber>
    </recommendedName>
    <alternativeName>
        <fullName evidence="1">Ribosomal protein uS12 (aspartate-C(3))-methylthiotransferase</fullName>
    </alternativeName>
    <alternativeName>
        <fullName evidence="1">Ribosome maturation factor RimO</fullName>
    </alternativeName>
</protein>